<gene>
    <name type="primary">OPG148</name>
    <name type="ORF">A20R</name>
</gene>
<feature type="chain" id="PRO_0000099267" description="DNA polymerase processivity factor component OPG148">
    <location>
        <begin position="1"/>
        <end position="426"/>
    </location>
</feature>
<feature type="helix" evidence="5">
    <location>
        <begin position="4"/>
        <end position="19"/>
    </location>
</feature>
<feature type="helix" evidence="5">
    <location>
        <begin position="25"/>
        <end position="42"/>
    </location>
</feature>
<feature type="strand" evidence="7">
    <location>
        <begin position="306"/>
        <end position="308"/>
    </location>
</feature>
<feature type="helix" evidence="6">
    <location>
        <begin position="313"/>
        <end position="323"/>
    </location>
</feature>
<feature type="helix" evidence="6">
    <location>
        <begin position="331"/>
        <end position="340"/>
    </location>
</feature>
<feature type="helix" evidence="6">
    <location>
        <begin position="342"/>
        <end position="350"/>
    </location>
</feature>
<feature type="helix" evidence="6">
    <location>
        <begin position="353"/>
        <end position="361"/>
    </location>
</feature>
<feature type="helix" evidence="6">
    <location>
        <begin position="365"/>
        <end position="373"/>
    </location>
</feature>
<feature type="strand" evidence="6">
    <location>
        <begin position="375"/>
        <end position="380"/>
    </location>
</feature>
<feature type="strand" evidence="6">
    <location>
        <begin position="383"/>
        <end position="390"/>
    </location>
</feature>
<feature type="helix" evidence="6">
    <location>
        <begin position="394"/>
        <end position="396"/>
    </location>
</feature>
<feature type="helix" evidence="6">
    <location>
        <begin position="398"/>
        <end position="405"/>
    </location>
</feature>
<feature type="helix" evidence="6">
    <location>
        <begin position="407"/>
        <end position="424"/>
    </location>
</feature>
<organism>
    <name type="scientific">Vaccinia virus (strain Copenhagen)</name>
    <name type="common">VACV</name>
    <dbReference type="NCBI Taxonomy" id="10249"/>
    <lineage>
        <taxon>Viruses</taxon>
        <taxon>Varidnaviria</taxon>
        <taxon>Bamfordvirae</taxon>
        <taxon>Nucleocytoviricota</taxon>
        <taxon>Pokkesviricetes</taxon>
        <taxon>Chitovirales</taxon>
        <taxon>Poxviridae</taxon>
        <taxon>Chordopoxvirinae</taxon>
        <taxon>Orthopoxvirus</taxon>
        <taxon>Vaccinia virus</taxon>
    </lineage>
</organism>
<accession>P20995</accession>
<reference key="1">
    <citation type="journal article" date="1990" name="Virology">
        <title>The complete DNA sequence of vaccinia virus.</title>
        <authorList>
            <person name="Goebel S.J."/>
            <person name="Johnson G.P."/>
            <person name="Perkus M.E."/>
            <person name="Davis S.W."/>
            <person name="Winslow J.P."/>
            <person name="Paoletti E."/>
        </authorList>
    </citation>
    <scope>NUCLEOTIDE SEQUENCE [LARGE SCALE GENOMIC DNA]</scope>
</reference>
<reference key="2">
    <citation type="journal article" date="1990" name="Virology">
        <title>Appendix to 'The complete DNA sequence of vaccinia virus'.</title>
        <authorList>
            <person name="Goebel S.J."/>
            <person name="Johnson G.P."/>
            <person name="Perkus M.E."/>
            <person name="Davis S.W."/>
            <person name="Winslow J.P."/>
            <person name="Paoletti E."/>
        </authorList>
    </citation>
    <scope>NUCLEOTIDE SEQUENCE [LARGE SCALE GENOMIC DNA]</scope>
</reference>
<reference key="3">
    <citation type="journal article" date="2014" name="PLoS Pathog.">
        <title>Crystal structure of the vaccinia virus DNA polymerase holoenzyme subunit D4 in complex with the A20 N-terminal domain.</title>
        <authorList>
            <person name="Contesto-Richefeu C."/>
            <person name="Tarbouriech N."/>
            <person name="Brazzolotto X."/>
            <person name="Betzi S."/>
            <person name="Morelli X."/>
            <person name="Burmeister W.P."/>
            <person name="Iseni F."/>
        </authorList>
    </citation>
    <scope>X-RAY CRYSTALLOGRAPHY (1.85 ANGSTROMS) OF 1-50</scope>
    <scope>FUNCTION</scope>
    <scope>INTERACTION WITH OPG071</scope>
</reference>
<reference key="4">
    <citation type="journal article" date="2015" name="J. Biol. Chem.">
        <title>Crystal Structure of the Vaccinia Virus Uracil-DNA Glycosylase in Complex with DNA.</title>
        <authorList>
            <person name="Burmeister W.P."/>
            <person name="Tarbouriech N."/>
            <person name="Fender P."/>
            <person name="Contesto-Richefeu C."/>
            <person name="Peyrefitte C.N."/>
            <person name="Iseni F."/>
        </authorList>
    </citation>
    <scope>X-RAY CRYSTALLOGRAPHY (1.85 ANGSTROMS) OF 1-50</scope>
    <scope>FUNCTION</scope>
    <scope>INTERACTION WITH OPG116</scope>
</reference>
<keyword id="KW-0002">3D-structure</keyword>
<keyword id="KW-0235">DNA replication</keyword>
<keyword id="KW-0597">Phosphoprotein</keyword>
<keyword id="KW-1185">Reference proteome</keyword>
<sequence>MTSSADLTNLKELLSLYKSLRFSDSAAIEKYNSLVEWGTSTYWKIGVQKVANVETSISDYYDEVKNKPFNIDPGYYIFLPVYFGSVFIYSKGKNMVELGSGNSFQIPDDMRSACNKVLDSDNGIDFLRFVLLNNRWIMEDAISKYQSPVNIFKLASEYGLNIPKYLEIEIEEDTLFDDELYSIIERSFDDKFPKISISYIKLGELRRQVVDFFKFSFMYIESIKVDRIGDNIFIPSVITKSGKKILVKDVDHLIRSKVREHTFVKVKKKNTFSILYDYDGNGTETRGEVIKRIIDTIGRDYYVNGKYFSKVGSAGLKQLTNKLDINECATVDELVDEINKSGTVKRKIKNQSAFDLSRECLGYPEADFITLVNNMRFKIENCKVVNFNIENTNCLNNPSIETIYRNFNQFVSIFNVVTDVKKRLFE</sequence>
<name>PG148_VACCC</name>
<organismHost>
    <name type="scientific">Homo sapiens</name>
    <name type="common">Human</name>
    <dbReference type="NCBI Taxonomy" id="9606"/>
</organismHost>
<comment type="function">
    <text evidence="2 3">Plays an essential role in viral DNA replication by acting as the polymerase processivity factor together with protein OPG116. Serves as a bridge which links the DNA polymerase OPG071 and the uracil DNA glycosylase.</text>
</comment>
<comment type="subunit">
    <text evidence="1">Interacts with the DNA polymerase catalytic subunit OPG071 (PubMed:24603707). Interacts with UDG/OPG116. Component of the uracil-DNA glycosylase(UDG)-OPG148-polymerase complex; OPG148 and UDG form a heterodimeric processivity factor that associates with OPG071 to form the processive polymerase holoenzyme. Interacts with OPG117.</text>
</comment>
<comment type="interaction">
    <interactant intactId="EBI-984598">
        <id>P20995</id>
    </interactant>
    <interactant intactId="EBI-984584">
        <id>P20536</id>
        <label>OPG116</label>
    </interactant>
    <organismsDiffer>false</organismsDiffer>
    <experiments>6</experiments>
</comment>
<comment type="similarity">
    <text evidence="4">Belongs to the orthopoxvirus OPG148 family.</text>
</comment>
<evidence type="ECO:0000250" key="1">
    <source>
        <dbReference type="UniProtKB" id="P68710"/>
    </source>
</evidence>
<evidence type="ECO:0000269" key="2">
    <source>
    </source>
</evidence>
<evidence type="ECO:0000269" key="3">
    <source>
    </source>
</evidence>
<evidence type="ECO:0000305" key="4"/>
<evidence type="ECO:0007829" key="5">
    <source>
        <dbReference type="PDB" id="4OD8"/>
    </source>
</evidence>
<evidence type="ECO:0007829" key="6">
    <source>
        <dbReference type="PDB" id="6ZXP"/>
    </source>
</evidence>
<evidence type="ECO:0007829" key="7">
    <source>
        <dbReference type="PDB" id="6ZYC"/>
    </source>
</evidence>
<dbReference type="EMBL" id="M35027">
    <property type="protein sequence ID" value="AAA48143.1"/>
    <property type="molecule type" value="Genomic_DNA"/>
</dbReference>
<dbReference type="PIR" id="D42519">
    <property type="entry name" value="D42519"/>
</dbReference>
<dbReference type="PDB" id="4OD8">
    <property type="method" value="X-ray"/>
    <property type="resolution" value="1.85 A"/>
    <property type="chains" value="C/D=1-50"/>
</dbReference>
<dbReference type="PDB" id="4ODA">
    <property type="method" value="X-ray"/>
    <property type="resolution" value="2.20 A"/>
    <property type="chains" value="C/D=1-50"/>
</dbReference>
<dbReference type="PDB" id="4YGM">
    <property type="method" value="X-ray"/>
    <property type="resolution" value="1.85 A"/>
    <property type="chains" value="C/D=1-50"/>
</dbReference>
<dbReference type="PDB" id="4YIG">
    <property type="method" value="X-ray"/>
    <property type="resolution" value="2.70 A"/>
    <property type="chains" value="B/F/J=3-50"/>
</dbReference>
<dbReference type="PDB" id="5JKR">
    <property type="method" value="X-ray"/>
    <property type="resolution" value="2.60 A"/>
    <property type="chains" value="C/D=1-50"/>
</dbReference>
<dbReference type="PDB" id="5JKS">
    <property type="method" value="X-ray"/>
    <property type="resolution" value="2.79 A"/>
    <property type="chains" value="C/D=1-50"/>
</dbReference>
<dbReference type="PDB" id="5JKT">
    <property type="method" value="X-ray"/>
    <property type="resolution" value="2.49 A"/>
    <property type="chains" value="C/D=1-50"/>
</dbReference>
<dbReference type="PDB" id="6ZXP">
    <property type="method" value="NMR"/>
    <property type="chains" value="A=304-426"/>
</dbReference>
<dbReference type="PDB" id="6ZYC">
    <property type="method" value="NMR"/>
    <property type="chains" value="A=304-426"/>
</dbReference>
<dbReference type="PDB" id="8Q3R">
    <property type="method" value="EM"/>
    <property type="resolution" value="3.80 A"/>
    <property type="chains" value="A=1-426"/>
</dbReference>
<dbReference type="PDBsum" id="4OD8"/>
<dbReference type="PDBsum" id="4ODA"/>
<dbReference type="PDBsum" id="4YGM"/>
<dbReference type="PDBsum" id="4YIG"/>
<dbReference type="PDBsum" id="5JKR"/>
<dbReference type="PDBsum" id="5JKS"/>
<dbReference type="PDBsum" id="5JKT"/>
<dbReference type="PDBsum" id="6ZXP"/>
<dbReference type="PDBsum" id="6ZYC"/>
<dbReference type="PDBsum" id="8Q3R"/>
<dbReference type="EMDB" id="EMD-18134"/>
<dbReference type="SASBDB" id="P20995"/>
<dbReference type="SMR" id="P20995"/>
<dbReference type="DIP" id="DIP-2180N"/>
<dbReference type="IntAct" id="P20995">
    <property type="interactions" value="4"/>
</dbReference>
<dbReference type="MINT" id="P20995"/>
<dbReference type="Proteomes" id="UP000008269">
    <property type="component" value="Segment"/>
</dbReference>
<dbReference type="GO" id="GO:0006260">
    <property type="term" value="P:DNA replication"/>
    <property type="evidence" value="ECO:0007669"/>
    <property type="project" value="UniProtKB-KW"/>
</dbReference>
<dbReference type="GO" id="GO:0039693">
    <property type="term" value="P:viral DNA genome replication"/>
    <property type="evidence" value="ECO:0000314"/>
    <property type="project" value="UniProtKB"/>
</dbReference>
<dbReference type="Gene3D" id="6.10.140.1880">
    <property type="match status" value="1"/>
</dbReference>
<dbReference type="InterPro" id="IPR010267">
    <property type="entry name" value="Chordopox_A20R"/>
</dbReference>
<dbReference type="Pfam" id="PF05941">
    <property type="entry name" value="Chordopox_A20R"/>
    <property type="match status" value="1"/>
</dbReference>
<protein>
    <recommendedName>
        <fullName>DNA polymerase processivity factor component OPG148</fullName>
    </recommendedName>
</protein>
<proteinExistence type="evidence at protein level"/>